<proteinExistence type="inferred from homology"/>
<reference key="1">
    <citation type="journal article" date="2007" name="PLoS ONE">
        <title>A glimpse of streptococcal toxic shock syndrome from comparative genomics of S. suis 2 Chinese isolates.</title>
        <authorList>
            <person name="Chen C."/>
            <person name="Tang J."/>
            <person name="Dong W."/>
            <person name="Wang C."/>
            <person name="Feng Y."/>
            <person name="Wang J."/>
            <person name="Zheng F."/>
            <person name="Pan X."/>
            <person name="Liu D."/>
            <person name="Li M."/>
            <person name="Song Y."/>
            <person name="Zhu X."/>
            <person name="Sun H."/>
            <person name="Feng T."/>
            <person name="Guo Z."/>
            <person name="Ju A."/>
            <person name="Ge J."/>
            <person name="Dong Y."/>
            <person name="Sun W."/>
            <person name="Jiang Y."/>
            <person name="Wang J."/>
            <person name="Yan J."/>
            <person name="Yang H."/>
            <person name="Wang X."/>
            <person name="Gao G.F."/>
            <person name="Yang R."/>
            <person name="Wang J."/>
            <person name="Yu J."/>
        </authorList>
    </citation>
    <scope>NUCLEOTIDE SEQUENCE [LARGE SCALE GENOMIC DNA]</scope>
    <source>
        <strain>98HAH33</strain>
    </source>
</reference>
<feature type="chain" id="PRO_0000313469" description="DNA ligase">
    <location>
        <begin position="1"/>
        <end position="652"/>
    </location>
</feature>
<feature type="domain" description="BRCT" evidence="1">
    <location>
        <begin position="577"/>
        <end position="652"/>
    </location>
</feature>
<feature type="active site" description="N6-AMP-lysine intermediate" evidence="1">
    <location>
        <position position="109"/>
    </location>
</feature>
<feature type="binding site" evidence="1">
    <location>
        <begin position="29"/>
        <end position="33"/>
    </location>
    <ligand>
        <name>NAD(+)</name>
        <dbReference type="ChEBI" id="CHEBI:57540"/>
    </ligand>
</feature>
<feature type="binding site" evidence="1">
    <location>
        <begin position="78"/>
        <end position="79"/>
    </location>
    <ligand>
        <name>NAD(+)</name>
        <dbReference type="ChEBI" id="CHEBI:57540"/>
    </ligand>
</feature>
<feature type="binding site" evidence="1">
    <location>
        <position position="107"/>
    </location>
    <ligand>
        <name>NAD(+)</name>
        <dbReference type="ChEBI" id="CHEBI:57540"/>
    </ligand>
</feature>
<feature type="binding site" evidence="1">
    <location>
        <position position="130"/>
    </location>
    <ligand>
        <name>NAD(+)</name>
        <dbReference type="ChEBI" id="CHEBI:57540"/>
    </ligand>
</feature>
<feature type="binding site" evidence="1">
    <location>
        <position position="164"/>
    </location>
    <ligand>
        <name>NAD(+)</name>
        <dbReference type="ChEBI" id="CHEBI:57540"/>
    </ligand>
</feature>
<feature type="binding site" evidence="1">
    <location>
        <position position="278"/>
    </location>
    <ligand>
        <name>NAD(+)</name>
        <dbReference type="ChEBI" id="CHEBI:57540"/>
    </ligand>
</feature>
<feature type="binding site" evidence="1">
    <location>
        <position position="302"/>
    </location>
    <ligand>
        <name>NAD(+)</name>
        <dbReference type="ChEBI" id="CHEBI:57540"/>
    </ligand>
</feature>
<feature type="binding site" evidence="1">
    <location>
        <position position="395"/>
    </location>
    <ligand>
        <name>Zn(2+)</name>
        <dbReference type="ChEBI" id="CHEBI:29105"/>
    </ligand>
</feature>
<feature type="binding site" evidence="1">
    <location>
        <position position="398"/>
    </location>
    <ligand>
        <name>Zn(2+)</name>
        <dbReference type="ChEBI" id="CHEBI:29105"/>
    </ligand>
</feature>
<feature type="binding site" evidence="1">
    <location>
        <position position="413"/>
    </location>
    <ligand>
        <name>Zn(2+)</name>
        <dbReference type="ChEBI" id="CHEBI:29105"/>
    </ligand>
</feature>
<feature type="binding site" evidence="1">
    <location>
        <position position="418"/>
    </location>
    <ligand>
        <name>Zn(2+)</name>
        <dbReference type="ChEBI" id="CHEBI:29105"/>
    </ligand>
</feature>
<accession>A4W1W6</accession>
<organism>
    <name type="scientific">Streptococcus suis (strain 98HAH33)</name>
    <dbReference type="NCBI Taxonomy" id="391296"/>
    <lineage>
        <taxon>Bacteria</taxon>
        <taxon>Bacillati</taxon>
        <taxon>Bacillota</taxon>
        <taxon>Bacilli</taxon>
        <taxon>Lactobacillales</taxon>
        <taxon>Streptococcaceae</taxon>
        <taxon>Streptococcus</taxon>
    </lineage>
</organism>
<protein>
    <recommendedName>
        <fullName evidence="1">DNA ligase</fullName>
        <ecNumber evidence="1">6.5.1.2</ecNumber>
    </recommendedName>
    <alternativeName>
        <fullName evidence="1">Polydeoxyribonucleotide synthase [NAD(+)]</fullName>
    </alternativeName>
</protein>
<name>DNLJ_STRS2</name>
<sequence length="652" mass="71586">MKTRISELVSVLNQYAKEYYQLDQPSVSDAEYDTLYRELVELETAHPELILPDSPTHRVGGKMLDGFEKYSHVYPLFSLQDAFSREELEAFDQRVRKEFPQATYICELKIDGLSISLTYEAGNLVVGATRGDGSVGENITENLKRVADVPLTLPEAVDITVRGECYMPKASFDRVNKQRQEAGEAEFVNPRNAAAGTLRQLDTGVVAQRGLATFLYQEASPSEATSQSQVLEKLDALGFVTNHEYCLAESIDDTWDFIEKIAERRDDLPYEIDGVVIKVNDLAIQEELGFTVKAPRWAVAYKFPAEEKEAEILSVDWTVGRTGVVTPTANLSPVQLAGTTVSRATLHNVDYIAEKDIRIGDTVIVYKAGDIIPAVLKVVDKYRKEQEIMPIPSHCPSCQSDLQHYEDEVALRCINPICPSQLMSKLEHFASRDAMNIAGLGSSIVEKLFGAGLVHDVADIYKLTVDDLLTLEGFKEKSANKLYQAIQTSKSNSAECLLFGLGIRHVGSKASKILVEKFGDLETLAFADQEAIASLEGLGQVIAKSLTTFFASEGAQQLLAELKEAKVNLTYLGQVVDENAALSGMTVVLTGKLERMKRNEAKAKLEALGANVAGSVSKKTNLVVAGTDAGSKLTKAQELGIEIKDEAWLESL</sequence>
<comment type="function">
    <text evidence="1">DNA ligase that catalyzes the formation of phosphodiester linkages between 5'-phosphoryl and 3'-hydroxyl groups in double-stranded DNA using NAD as a coenzyme and as the energy source for the reaction. It is essential for DNA replication and repair of damaged DNA.</text>
</comment>
<comment type="catalytic activity">
    <reaction evidence="1">
        <text>NAD(+) + (deoxyribonucleotide)n-3'-hydroxyl + 5'-phospho-(deoxyribonucleotide)m = (deoxyribonucleotide)n+m + AMP + beta-nicotinamide D-nucleotide.</text>
        <dbReference type="EC" id="6.5.1.2"/>
    </reaction>
</comment>
<comment type="cofactor">
    <cofactor evidence="1">
        <name>Mg(2+)</name>
        <dbReference type="ChEBI" id="CHEBI:18420"/>
    </cofactor>
    <cofactor evidence="1">
        <name>Mn(2+)</name>
        <dbReference type="ChEBI" id="CHEBI:29035"/>
    </cofactor>
</comment>
<comment type="similarity">
    <text evidence="1">Belongs to the NAD-dependent DNA ligase family. LigA subfamily.</text>
</comment>
<keyword id="KW-0227">DNA damage</keyword>
<keyword id="KW-0234">DNA repair</keyword>
<keyword id="KW-0235">DNA replication</keyword>
<keyword id="KW-0436">Ligase</keyword>
<keyword id="KW-0460">Magnesium</keyword>
<keyword id="KW-0464">Manganese</keyword>
<keyword id="KW-0479">Metal-binding</keyword>
<keyword id="KW-0520">NAD</keyword>
<keyword id="KW-0862">Zinc</keyword>
<evidence type="ECO:0000255" key="1">
    <source>
        <dbReference type="HAMAP-Rule" id="MF_01588"/>
    </source>
</evidence>
<gene>
    <name evidence="1" type="primary">ligA</name>
    <name type="ordered locus">SSU98_1197</name>
</gene>
<dbReference type="EC" id="6.5.1.2" evidence="1"/>
<dbReference type="EMBL" id="CP000408">
    <property type="protein sequence ID" value="ABP92355.1"/>
    <property type="molecule type" value="Genomic_DNA"/>
</dbReference>
<dbReference type="SMR" id="A4W1W6"/>
<dbReference type="KEGG" id="ssv:SSU98_1197"/>
<dbReference type="HOGENOM" id="CLU_007764_2_1_9"/>
<dbReference type="GO" id="GO:0005829">
    <property type="term" value="C:cytosol"/>
    <property type="evidence" value="ECO:0007669"/>
    <property type="project" value="TreeGrafter"/>
</dbReference>
<dbReference type="GO" id="GO:0003677">
    <property type="term" value="F:DNA binding"/>
    <property type="evidence" value="ECO:0007669"/>
    <property type="project" value="InterPro"/>
</dbReference>
<dbReference type="GO" id="GO:0003911">
    <property type="term" value="F:DNA ligase (NAD+) activity"/>
    <property type="evidence" value="ECO:0007669"/>
    <property type="project" value="UniProtKB-UniRule"/>
</dbReference>
<dbReference type="GO" id="GO:0046872">
    <property type="term" value="F:metal ion binding"/>
    <property type="evidence" value="ECO:0007669"/>
    <property type="project" value="UniProtKB-KW"/>
</dbReference>
<dbReference type="GO" id="GO:0006281">
    <property type="term" value="P:DNA repair"/>
    <property type="evidence" value="ECO:0007669"/>
    <property type="project" value="UniProtKB-KW"/>
</dbReference>
<dbReference type="GO" id="GO:0006260">
    <property type="term" value="P:DNA replication"/>
    <property type="evidence" value="ECO:0007669"/>
    <property type="project" value="UniProtKB-KW"/>
</dbReference>
<dbReference type="CDD" id="cd17748">
    <property type="entry name" value="BRCT_DNA_ligase_like"/>
    <property type="match status" value="1"/>
</dbReference>
<dbReference type="CDD" id="cd00114">
    <property type="entry name" value="LIGANc"/>
    <property type="match status" value="1"/>
</dbReference>
<dbReference type="FunFam" id="1.10.150.20:FF:000006">
    <property type="entry name" value="DNA ligase"/>
    <property type="match status" value="1"/>
</dbReference>
<dbReference type="FunFam" id="1.10.150.20:FF:000007">
    <property type="entry name" value="DNA ligase"/>
    <property type="match status" value="1"/>
</dbReference>
<dbReference type="FunFam" id="1.10.287.610:FF:000002">
    <property type="entry name" value="DNA ligase"/>
    <property type="match status" value="1"/>
</dbReference>
<dbReference type="FunFam" id="2.40.50.140:FF:000012">
    <property type="entry name" value="DNA ligase"/>
    <property type="match status" value="1"/>
</dbReference>
<dbReference type="FunFam" id="3.30.470.30:FF:000001">
    <property type="entry name" value="DNA ligase"/>
    <property type="match status" value="1"/>
</dbReference>
<dbReference type="Gene3D" id="6.20.10.30">
    <property type="match status" value="1"/>
</dbReference>
<dbReference type="Gene3D" id="1.10.150.20">
    <property type="entry name" value="5' to 3' exonuclease, C-terminal subdomain"/>
    <property type="match status" value="2"/>
</dbReference>
<dbReference type="Gene3D" id="3.40.50.10190">
    <property type="entry name" value="BRCT domain"/>
    <property type="match status" value="1"/>
</dbReference>
<dbReference type="Gene3D" id="3.30.470.30">
    <property type="entry name" value="DNA ligase/mRNA capping enzyme"/>
    <property type="match status" value="1"/>
</dbReference>
<dbReference type="Gene3D" id="1.10.287.610">
    <property type="entry name" value="Helix hairpin bin"/>
    <property type="match status" value="1"/>
</dbReference>
<dbReference type="Gene3D" id="2.40.50.140">
    <property type="entry name" value="Nucleic acid-binding proteins"/>
    <property type="match status" value="1"/>
</dbReference>
<dbReference type="HAMAP" id="MF_01588">
    <property type="entry name" value="DNA_ligase_A"/>
    <property type="match status" value="1"/>
</dbReference>
<dbReference type="InterPro" id="IPR001357">
    <property type="entry name" value="BRCT_dom"/>
</dbReference>
<dbReference type="InterPro" id="IPR036420">
    <property type="entry name" value="BRCT_dom_sf"/>
</dbReference>
<dbReference type="InterPro" id="IPR041663">
    <property type="entry name" value="DisA/LigA_HHH"/>
</dbReference>
<dbReference type="InterPro" id="IPR001679">
    <property type="entry name" value="DNA_ligase"/>
</dbReference>
<dbReference type="InterPro" id="IPR018239">
    <property type="entry name" value="DNA_ligase_AS"/>
</dbReference>
<dbReference type="InterPro" id="IPR033136">
    <property type="entry name" value="DNA_ligase_CS"/>
</dbReference>
<dbReference type="InterPro" id="IPR013839">
    <property type="entry name" value="DNAligase_adenylation"/>
</dbReference>
<dbReference type="InterPro" id="IPR013840">
    <property type="entry name" value="DNAligase_N"/>
</dbReference>
<dbReference type="InterPro" id="IPR003583">
    <property type="entry name" value="Hlx-hairpin-Hlx_DNA-bd_motif"/>
</dbReference>
<dbReference type="InterPro" id="IPR012340">
    <property type="entry name" value="NA-bd_OB-fold"/>
</dbReference>
<dbReference type="InterPro" id="IPR004150">
    <property type="entry name" value="NAD_DNA_ligase_OB"/>
</dbReference>
<dbReference type="InterPro" id="IPR010994">
    <property type="entry name" value="RuvA_2-like"/>
</dbReference>
<dbReference type="InterPro" id="IPR004149">
    <property type="entry name" value="Znf_DNAligase_C4"/>
</dbReference>
<dbReference type="NCBIfam" id="TIGR00575">
    <property type="entry name" value="dnlj"/>
    <property type="match status" value="1"/>
</dbReference>
<dbReference type="NCBIfam" id="NF005932">
    <property type="entry name" value="PRK07956.1"/>
    <property type="match status" value="1"/>
</dbReference>
<dbReference type="PANTHER" id="PTHR23389">
    <property type="entry name" value="CHROMOSOME TRANSMISSION FIDELITY FACTOR 18"/>
    <property type="match status" value="1"/>
</dbReference>
<dbReference type="PANTHER" id="PTHR23389:SF9">
    <property type="entry name" value="DNA LIGASE"/>
    <property type="match status" value="1"/>
</dbReference>
<dbReference type="Pfam" id="PF00533">
    <property type="entry name" value="BRCT"/>
    <property type="match status" value="1"/>
</dbReference>
<dbReference type="Pfam" id="PF01653">
    <property type="entry name" value="DNA_ligase_aden"/>
    <property type="match status" value="1"/>
</dbReference>
<dbReference type="Pfam" id="PF03120">
    <property type="entry name" value="DNA_ligase_OB"/>
    <property type="match status" value="1"/>
</dbReference>
<dbReference type="Pfam" id="PF03119">
    <property type="entry name" value="DNA_ligase_ZBD"/>
    <property type="match status" value="1"/>
</dbReference>
<dbReference type="Pfam" id="PF12826">
    <property type="entry name" value="HHH_2"/>
    <property type="match status" value="1"/>
</dbReference>
<dbReference type="Pfam" id="PF14520">
    <property type="entry name" value="HHH_5"/>
    <property type="match status" value="1"/>
</dbReference>
<dbReference type="Pfam" id="PF22745">
    <property type="entry name" value="Nlig-Ia"/>
    <property type="match status" value="1"/>
</dbReference>
<dbReference type="PIRSF" id="PIRSF001604">
    <property type="entry name" value="LigA"/>
    <property type="match status" value="1"/>
</dbReference>
<dbReference type="SMART" id="SM00292">
    <property type="entry name" value="BRCT"/>
    <property type="match status" value="1"/>
</dbReference>
<dbReference type="SMART" id="SM00278">
    <property type="entry name" value="HhH1"/>
    <property type="match status" value="3"/>
</dbReference>
<dbReference type="SMART" id="SM00532">
    <property type="entry name" value="LIGANc"/>
    <property type="match status" value="1"/>
</dbReference>
<dbReference type="SUPFAM" id="SSF52113">
    <property type="entry name" value="BRCT domain"/>
    <property type="match status" value="1"/>
</dbReference>
<dbReference type="SUPFAM" id="SSF56091">
    <property type="entry name" value="DNA ligase/mRNA capping enzyme, catalytic domain"/>
    <property type="match status" value="1"/>
</dbReference>
<dbReference type="SUPFAM" id="SSF50249">
    <property type="entry name" value="Nucleic acid-binding proteins"/>
    <property type="match status" value="1"/>
</dbReference>
<dbReference type="SUPFAM" id="SSF47781">
    <property type="entry name" value="RuvA domain 2-like"/>
    <property type="match status" value="1"/>
</dbReference>
<dbReference type="PROSITE" id="PS50172">
    <property type="entry name" value="BRCT"/>
    <property type="match status" value="1"/>
</dbReference>
<dbReference type="PROSITE" id="PS01055">
    <property type="entry name" value="DNA_LIGASE_N1"/>
    <property type="match status" value="1"/>
</dbReference>
<dbReference type="PROSITE" id="PS01056">
    <property type="entry name" value="DNA_LIGASE_N2"/>
    <property type="match status" value="1"/>
</dbReference>